<gene>
    <name type="primary">nifB</name>
</gene>
<sequence>MELSVLGQNNGGQHSAGGCSSSSCGSTHDQLSHLPENIRAKVQNHPCYSEEAHHYFARMHVAVAPACNIQCHYCNRKYDCANESRPGVVSEVLTPEQAVKKVKAVAAAIPQMSVLGIAGPGDPLANPKRTLDTFRMLSEQAPDMKLCVSTNGLALPECVEELAKHNIDHVTITINCVDPEIGAKIYPDLLEQQAHPRRQGRKILIEQQQKGLEMLVARGILVKVNSVMIPGVNDEHLKEVSKIVKAKGAFLHNVMPLIAEPEHGTFYGVMGQRSPEPEELQDLQDACAGDMNMMRHCRQCRADAVGMLGEDRGDEFTLDKIESMEIDYEAAMVKRAAIHAAIKEELDEKAAKKERLAGLSVASVQNGTSGRYRPVLMAVATSGGGLINQHFGHATEFLVYEASPSGVRFIGHRRVDQYCVGNDTCGEKESALAGSIRALKGCEAVLCSKIGFEPWSDLETAGIQPNGEHAMEPIEEAVMAVYREMIESGRLENDGALLQAKA</sequence>
<reference key="1">
    <citation type="journal article" date="1988" name="J. Bacteriol.">
        <title>Nucleotide sequence and genetic analysis of the nifB-nifQ region from Azotobacter vinelandii.</title>
        <authorList>
            <person name="Joerger R.D."/>
            <person name="Bishop P.E."/>
        </authorList>
    </citation>
    <scope>NUCLEOTIDE SEQUENCE [GENOMIC DNA]</scope>
</reference>
<protein>
    <recommendedName>
        <fullName>FeMo cofactor biosynthesis protein NifB</fullName>
        <ecNumber>4.-.-.-</ecNumber>
    </recommendedName>
    <alternativeName>
        <fullName>Nitrogenase cofactor maturase NifB</fullName>
    </alternativeName>
    <alternativeName>
        <fullName>Radical SAM assemblase NifB</fullName>
    </alternativeName>
</protein>
<name>NIFB_AZOVI</name>
<dbReference type="EC" id="4.-.-.-"/>
<dbReference type="EMBL" id="J03411">
    <property type="protein sequence ID" value="AAA22148.1"/>
    <property type="molecule type" value="Genomic_DNA"/>
</dbReference>
<dbReference type="PIR" id="B27733">
    <property type="entry name" value="B27733"/>
</dbReference>
<dbReference type="SMR" id="P11067"/>
<dbReference type="DIP" id="DIP-61142N"/>
<dbReference type="BioCyc" id="MetaCyc:MONOMER-19485"/>
<dbReference type="UniPathway" id="UPA00782"/>
<dbReference type="GO" id="GO:0051539">
    <property type="term" value="F:4 iron, 4 sulfur cluster binding"/>
    <property type="evidence" value="ECO:0007669"/>
    <property type="project" value="UniProtKB-KW"/>
</dbReference>
<dbReference type="GO" id="GO:0016829">
    <property type="term" value="F:lyase activity"/>
    <property type="evidence" value="ECO:0007669"/>
    <property type="project" value="UniProtKB-KW"/>
</dbReference>
<dbReference type="GO" id="GO:0046872">
    <property type="term" value="F:metal ion binding"/>
    <property type="evidence" value="ECO:0007669"/>
    <property type="project" value="UniProtKB-KW"/>
</dbReference>
<dbReference type="GO" id="GO:0032324">
    <property type="term" value="P:molybdopterin cofactor biosynthetic process"/>
    <property type="evidence" value="ECO:0000315"/>
    <property type="project" value="CACAO"/>
</dbReference>
<dbReference type="GO" id="GO:0009399">
    <property type="term" value="P:nitrogen fixation"/>
    <property type="evidence" value="ECO:0007669"/>
    <property type="project" value="UniProtKB-KW"/>
</dbReference>
<dbReference type="CDD" id="cd00852">
    <property type="entry name" value="NifB"/>
    <property type="match status" value="1"/>
</dbReference>
<dbReference type="CDD" id="cd01335">
    <property type="entry name" value="Radical_SAM"/>
    <property type="match status" value="1"/>
</dbReference>
<dbReference type="Gene3D" id="3.20.20.70">
    <property type="entry name" value="Aldolase class I"/>
    <property type="match status" value="1"/>
</dbReference>
<dbReference type="Gene3D" id="3.30.420.130">
    <property type="entry name" value="Dinitrogenase iron-molybdenum cofactor biosynthesis domain"/>
    <property type="match status" value="1"/>
</dbReference>
<dbReference type="InterPro" id="IPR013785">
    <property type="entry name" value="Aldolase_TIM"/>
</dbReference>
<dbReference type="InterPro" id="IPR003731">
    <property type="entry name" value="Di-Nase_FeMo-co_biosynth"/>
</dbReference>
<dbReference type="InterPro" id="IPR036105">
    <property type="entry name" value="DiNase_FeMo-co_biosyn_sf"/>
</dbReference>
<dbReference type="InterPro" id="IPR006638">
    <property type="entry name" value="Elp3/MiaA/NifB-like_rSAM"/>
</dbReference>
<dbReference type="InterPro" id="IPR000385">
    <property type="entry name" value="MoaA_NifB_PqqE_Fe-S-bd_CS"/>
</dbReference>
<dbReference type="InterPro" id="IPR005980">
    <property type="entry name" value="Nase_CF_NifB"/>
</dbReference>
<dbReference type="InterPro" id="IPR034165">
    <property type="entry name" value="NifB_C"/>
</dbReference>
<dbReference type="InterPro" id="IPR007197">
    <property type="entry name" value="rSAM"/>
</dbReference>
<dbReference type="NCBIfam" id="TIGR01290">
    <property type="entry name" value="nifB"/>
    <property type="match status" value="1"/>
</dbReference>
<dbReference type="PANTHER" id="PTHR43787:SF13">
    <property type="entry name" value="FEMO COFACTOR BIOSYNTHESIS PROTEIN NIFB"/>
    <property type="match status" value="1"/>
</dbReference>
<dbReference type="PANTHER" id="PTHR43787">
    <property type="entry name" value="FEMO COFACTOR BIOSYNTHESIS PROTEIN NIFB-RELATED"/>
    <property type="match status" value="1"/>
</dbReference>
<dbReference type="Pfam" id="PF02579">
    <property type="entry name" value="Nitro_FeMo-Co"/>
    <property type="match status" value="1"/>
</dbReference>
<dbReference type="Pfam" id="PF04055">
    <property type="entry name" value="Radical_SAM"/>
    <property type="match status" value="1"/>
</dbReference>
<dbReference type="SFLD" id="SFLDF00281">
    <property type="entry name" value="FeMo_cofactor_biosynthesis_pro"/>
    <property type="match status" value="1"/>
</dbReference>
<dbReference type="SFLD" id="SFLDS00029">
    <property type="entry name" value="Radical_SAM"/>
    <property type="match status" value="1"/>
</dbReference>
<dbReference type="SFLD" id="SFLDG01067">
    <property type="entry name" value="SPASM/twitch_domain_containing"/>
    <property type="match status" value="1"/>
</dbReference>
<dbReference type="SMART" id="SM00729">
    <property type="entry name" value="Elp3"/>
    <property type="match status" value="1"/>
</dbReference>
<dbReference type="SUPFAM" id="SSF53146">
    <property type="entry name" value="Nitrogenase accessory factor-like"/>
    <property type="match status" value="1"/>
</dbReference>
<dbReference type="SUPFAM" id="SSF102114">
    <property type="entry name" value="Radical SAM enzymes"/>
    <property type="match status" value="1"/>
</dbReference>
<dbReference type="PROSITE" id="PS01305">
    <property type="entry name" value="MOAA_NIFB_PQQE"/>
    <property type="match status" value="1"/>
</dbReference>
<dbReference type="PROSITE" id="PS51918">
    <property type="entry name" value="RADICAL_SAM"/>
    <property type="match status" value="1"/>
</dbReference>
<proteinExistence type="inferred from homology"/>
<accession>P11067</accession>
<evidence type="ECO:0000250" key="1">
    <source>
        <dbReference type="UniProtKB" id="D5VRM1"/>
    </source>
</evidence>
<evidence type="ECO:0000250" key="2">
    <source>
        <dbReference type="UniProtKB" id="P69848"/>
    </source>
</evidence>
<evidence type="ECO:0000255" key="3">
    <source>
        <dbReference type="PROSITE-ProRule" id="PRU01266"/>
    </source>
</evidence>
<evidence type="ECO:0000256" key="4">
    <source>
        <dbReference type="SAM" id="MobiDB-lite"/>
    </source>
</evidence>
<evidence type="ECO:0000305" key="5"/>
<feature type="chain" id="PRO_0000153036" description="FeMo cofactor biosynthesis protein NifB">
    <location>
        <begin position="1"/>
        <end position="502"/>
    </location>
</feature>
<feature type="domain" description="Radical SAM core" evidence="3">
    <location>
        <begin position="53"/>
        <end position="301"/>
    </location>
</feature>
<feature type="region of interest" description="Disordered" evidence="4">
    <location>
        <begin position="1"/>
        <end position="21"/>
    </location>
</feature>
<feature type="compositionally biased region" description="Low complexity" evidence="4">
    <location>
        <begin position="11"/>
        <end position="21"/>
    </location>
</feature>
<feature type="binding site" evidence="2">
    <location>
        <position position="67"/>
    </location>
    <ligand>
        <name>[4Fe-4S] cluster</name>
        <dbReference type="ChEBI" id="CHEBI:49883"/>
        <label>1</label>
        <note>4Fe-4S-S-AdoMet</note>
    </ligand>
</feature>
<feature type="binding site" evidence="2">
    <location>
        <position position="71"/>
    </location>
    <ligand>
        <name>[4Fe-4S] cluster</name>
        <dbReference type="ChEBI" id="CHEBI:49883"/>
        <label>1</label>
        <note>4Fe-4S-S-AdoMet</note>
    </ligand>
</feature>
<feature type="binding site" evidence="2">
    <location>
        <position position="73"/>
    </location>
    <ligand>
        <name>S-adenosyl-L-methionine</name>
        <dbReference type="ChEBI" id="CHEBI:59789"/>
    </ligand>
</feature>
<feature type="binding site" evidence="2">
    <location>
        <position position="74"/>
    </location>
    <ligand>
        <name>[4Fe-4S] cluster</name>
        <dbReference type="ChEBI" id="CHEBI:49883"/>
        <label>1</label>
        <note>4Fe-4S-S-AdoMet</note>
    </ligand>
</feature>
<feature type="binding site" evidence="2">
    <location>
        <position position="121"/>
    </location>
    <ligand>
        <name>S-adenosyl-L-methionine</name>
        <dbReference type="ChEBI" id="CHEBI:59789"/>
    </ligand>
</feature>
<feature type="binding site" evidence="2">
    <location>
        <position position="173"/>
    </location>
    <ligand>
        <name>S-adenosyl-L-methionine</name>
        <dbReference type="ChEBI" id="CHEBI:59789"/>
    </ligand>
</feature>
<feature type="binding site" evidence="1">
    <location>
        <position position="297"/>
    </location>
    <ligand>
        <name>[4Fe-4S] cluster</name>
        <dbReference type="ChEBI" id="CHEBI:49883"/>
        <label>2</label>
    </ligand>
</feature>
<feature type="binding site" evidence="1">
    <location>
        <position position="300"/>
    </location>
    <ligand>
        <name>[4Fe-4S] cluster</name>
        <dbReference type="ChEBI" id="CHEBI:49883"/>
        <label>2</label>
    </ligand>
</feature>
<keyword id="KW-0004">4Fe-4S</keyword>
<keyword id="KW-0408">Iron</keyword>
<keyword id="KW-0411">Iron-sulfur</keyword>
<keyword id="KW-0456">Lyase</keyword>
<keyword id="KW-0479">Metal-binding</keyword>
<keyword id="KW-0535">Nitrogen fixation</keyword>
<keyword id="KW-0949">S-adenosyl-L-methionine</keyword>
<organism>
    <name type="scientific">Azotobacter vinelandii</name>
    <dbReference type="NCBI Taxonomy" id="354"/>
    <lineage>
        <taxon>Bacteria</taxon>
        <taxon>Pseudomonadati</taxon>
        <taxon>Pseudomonadota</taxon>
        <taxon>Gammaproteobacteria</taxon>
        <taxon>Pseudomonadales</taxon>
        <taxon>Pseudomonadaceae</taxon>
        <taxon>Azotobacter</taxon>
    </lineage>
</organism>
<comment type="function">
    <text evidence="1">Involved in the biosynthesis of the iron-molybdenum cofactor (FeMo-co or M-cluster) found in the dinitrogenase enzyme of the nitrogenase complex in nitrogen-fixing microorganisms. NifB catalyzes the crucial step of radical SAM-dependent carbide insertion that occurs concomitant with the insertion of a 9th sulfur and the rearrangement/coupling of two [4Fe-4S] clusters into a [8Fe-9S-C] cluster, the precursor to the M-cluster.</text>
</comment>
<comment type="cofactor">
    <cofactor evidence="1">
        <name>[4Fe-4S] cluster</name>
        <dbReference type="ChEBI" id="CHEBI:49883"/>
    </cofactor>
    <text evidence="1">Binds 3 [4Fe-4S] clusters per monomer. One cluster is coordinated with 3 cysteines and an exchangeable S-adenosyl-L-methionine. The two others probably act as substrate.</text>
</comment>
<comment type="pathway">
    <text evidence="1">Cofactor biosynthesis; Fe-Mo cofactor biosynthesis.</text>
</comment>
<comment type="similarity">
    <text evidence="5">Belongs to the radical SAM superfamily. NifB family.</text>
</comment>